<reference key="1">
    <citation type="journal article" date="2004" name="J. Bacteriol.">
        <title>A novel tetrahydrofolate-dependent O-demethylase gene is essential for growth of Sphingomonas paucimobilis SYK-6 with syringate.</title>
        <authorList>
            <person name="Masai E."/>
            <person name="Sasaki M."/>
            <person name="Minakawa Y."/>
            <person name="Abe T."/>
            <person name="Sonoki T."/>
            <person name="Miyauchi K."/>
            <person name="Katayama Y."/>
            <person name="Fukuda M."/>
        </authorList>
    </citation>
    <scope>NUCLEOTIDE SEQUENCE [GENOMIC DNA]</scope>
    <scope>FUNCTION</scope>
    <scope>CATALYTIC ACTIVITY</scope>
    <scope>BIOPHYSICOCHEMICAL PROPERTIES</scope>
    <scope>PATHWAY</scope>
    <scope>INDUCTION</scope>
    <scope>DISRUPTION PHENOTYPE</scope>
    <source>
        <strain>NBRC 103272 / SYK-6</strain>
    </source>
</reference>
<reference key="2">
    <citation type="journal article" date="2012" name="J. Bacteriol.">
        <title>Complete genome sequence of Sphingobium sp. strain SYK-6, a degrader of lignin-derived biaryls and monoaryls.</title>
        <authorList>
            <person name="Masai E."/>
            <person name="Kamimura N."/>
            <person name="Kasai D."/>
            <person name="Oguchi A."/>
            <person name="Ankai A."/>
            <person name="Fukui S."/>
            <person name="Takahashi M."/>
            <person name="Yashiro I."/>
            <person name="Sasaki H."/>
            <person name="Harada T."/>
            <person name="Nakamura S."/>
            <person name="Katano Y."/>
            <person name="Narita-Yamada S."/>
            <person name="Nakazawa H."/>
            <person name="Hara H."/>
            <person name="Katayama Y."/>
            <person name="Fukuda M."/>
            <person name="Yamazaki S."/>
            <person name="Fujita N."/>
        </authorList>
    </citation>
    <scope>NUCLEOTIDE SEQUENCE [LARGE SCALE GENOMIC DNA]</scope>
    <source>
        <strain>NBRC 103272 / SYK-6</strain>
    </source>
</reference>
<feature type="chain" id="PRO_0000447210" description="Syringate O-demethylase">
    <location>
        <begin position="1"/>
        <end position="462"/>
    </location>
</feature>
<protein>
    <recommendedName>
        <fullName evidence="2">Syringate O-demethylase</fullName>
        <ecNumber evidence="1">2.1.1.-</ecNumber>
    </recommendedName>
    <alternativeName>
        <fullName evidence="2">Tetrahydrofolate-dependent syringate O-demethylase</fullName>
        <shortName evidence="2">H(4)folate-dependent syringate O-demethylase</shortName>
    </alternativeName>
</protein>
<name>DESA_SPHSK</name>
<sequence>MAKSLQDVLDNAGNAVDFLRNQQTGPNVYPGVPAEYSNWRNEQRAWAKTAVLFNQSYHMVELMVEGPDAFAFLNYLGINSFKNFAPGKAKQWVPVTAEGYVIGDVILFYLAENQFNLVGRAPAIEWAEFHAATGKWNVTLTRDERTALRTDGVRRHYRFQLQGPNAMAILTDAMGQTPPDLKFFNMADIQIAGKTVGALRHGMAGQPGYELYGPWADYEAVHSALVAAGKNHGLALVGGRAYSSNTLESGWVPSPFPGYLFGEGSADFRKWAGENSYGAKCSIGGSYVPESLEGYGLTPWDIGYGIIVKFDHDFIGKEALEKMANEPHLEKVTLALDDEDMLRVMSSYFSDSGRAKYFEFPSAVYSMHPYDSVLVDGKHVGVSTWVGYSSNEGKMLTLAMIDPKYAKPGTEVSLLWGEPNGGTSKPTVEPHEQTEIKAVVAPVPYSAVARTGYADSWRTKKA</sequence>
<accession>G2IJ05</accession>
<accession>Q7WST1</accession>
<evidence type="ECO:0000269" key="1">
    <source>
    </source>
</evidence>
<evidence type="ECO:0000303" key="2">
    <source>
    </source>
</evidence>
<evidence type="ECO:0000305" key="3"/>
<evidence type="ECO:0000305" key="4">
    <source>
    </source>
</evidence>
<evidence type="ECO:0000312" key="5">
    <source>
        <dbReference type="EMBL" id="BAK67175.1"/>
    </source>
</evidence>
<gene>
    <name evidence="2" type="primary">desA</name>
    <name evidence="5" type="ORF">SLG_25000</name>
</gene>
<organism>
    <name type="scientific">Sphingobium sp. (strain NBRC 103272 / SYK-6)</name>
    <dbReference type="NCBI Taxonomy" id="627192"/>
    <lineage>
        <taxon>Bacteria</taxon>
        <taxon>Pseudomonadati</taxon>
        <taxon>Pseudomonadota</taxon>
        <taxon>Alphaproteobacteria</taxon>
        <taxon>Sphingomonadales</taxon>
        <taxon>Sphingomonadaceae</taxon>
        <taxon>Sphingobium</taxon>
    </lineage>
</organism>
<dbReference type="EC" id="2.1.1.-" evidence="1"/>
<dbReference type="EMBL" id="AB110975">
    <property type="protein sequence ID" value="BAC79257.1"/>
    <property type="molecule type" value="Genomic_DNA"/>
</dbReference>
<dbReference type="EMBL" id="AP012222">
    <property type="protein sequence ID" value="BAK67175.1"/>
    <property type="molecule type" value="Genomic_DNA"/>
</dbReference>
<dbReference type="RefSeq" id="WP_014076820.1">
    <property type="nucleotide sequence ID" value="NC_015976.1"/>
</dbReference>
<dbReference type="SMR" id="G2IJ05"/>
<dbReference type="STRING" id="627192.SLG_25000"/>
<dbReference type="KEGG" id="ssy:SLG_25000"/>
<dbReference type="eggNOG" id="COG0404">
    <property type="taxonomic scope" value="Bacteria"/>
</dbReference>
<dbReference type="HOGENOM" id="CLU_046852_1_0_5"/>
<dbReference type="OrthoDB" id="9772660at2"/>
<dbReference type="BRENDA" id="2.1.1.341">
    <property type="organism ID" value="2280"/>
</dbReference>
<dbReference type="UniPathway" id="UPA00892"/>
<dbReference type="Proteomes" id="UP000001275">
    <property type="component" value="Chromosome"/>
</dbReference>
<dbReference type="GO" id="GO:0008168">
    <property type="term" value="F:methyltransferase activity"/>
    <property type="evidence" value="ECO:0007669"/>
    <property type="project" value="UniProtKB-KW"/>
</dbReference>
<dbReference type="GO" id="GO:0046274">
    <property type="term" value="P:lignin catabolic process"/>
    <property type="evidence" value="ECO:0007669"/>
    <property type="project" value="UniProtKB-UniPathway"/>
</dbReference>
<dbReference type="GO" id="GO:0032259">
    <property type="term" value="P:methylation"/>
    <property type="evidence" value="ECO:0007669"/>
    <property type="project" value="UniProtKB-KW"/>
</dbReference>
<dbReference type="Gene3D" id="3.30.1360.120">
    <property type="entry name" value="Probable tRNA modification gtpase trme, domain 1"/>
    <property type="match status" value="1"/>
</dbReference>
<dbReference type="InterPro" id="IPR006222">
    <property type="entry name" value="GCV_T_N"/>
</dbReference>
<dbReference type="InterPro" id="IPR028896">
    <property type="entry name" value="GcvT/YgfZ/DmdA"/>
</dbReference>
<dbReference type="InterPro" id="IPR029043">
    <property type="entry name" value="GcvT/YgfZ_C"/>
</dbReference>
<dbReference type="InterPro" id="IPR027266">
    <property type="entry name" value="TrmE/GcvT_dom1"/>
</dbReference>
<dbReference type="NCBIfam" id="NF047633">
    <property type="entry name" value="SyrngDmethDesA"/>
    <property type="match status" value="1"/>
</dbReference>
<dbReference type="PANTHER" id="PTHR43757">
    <property type="entry name" value="AMINOMETHYLTRANSFERASE"/>
    <property type="match status" value="1"/>
</dbReference>
<dbReference type="PANTHER" id="PTHR43757:SF2">
    <property type="entry name" value="AMINOMETHYLTRANSFERASE, MITOCHONDRIAL"/>
    <property type="match status" value="1"/>
</dbReference>
<dbReference type="Pfam" id="PF01571">
    <property type="entry name" value="GCV_T"/>
    <property type="match status" value="1"/>
</dbReference>
<dbReference type="PIRSF" id="PIRSF006487">
    <property type="entry name" value="GcvT"/>
    <property type="match status" value="1"/>
</dbReference>
<dbReference type="SUPFAM" id="SSF101790">
    <property type="entry name" value="Aminomethyltransferase beta-barrel domain"/>
    <property type="match status" value="1"/>
</dbReference>
<dbReference type="SUPFAM" id="SSF103025">
    <property type="entry name" value="Folate-binding domain"/>
    <property type="match status" value="1"/>
</dbReference>
<comment type="function">
    <text evidence="1">Involved in the catabolism of syringate. Catalyzes the conversion of syringate to 3-O-methylgallate (3MGA) in the presence of tetrahydrofolate. Has weak activity with vanillate and 3-O-methylgallate.</text>
</comment>
<comment type="catalytic activity">
    <reaction evidence="1">
        <text>syringate + (6S)-5,6,7,8-tetrahydrofolate = 3-O-methylgallate + (6S)-5-methyl-5,6,7,8-tetrahydrofolate</text>
        <dbReference type="Rhea" id="RHEA:59840"/>
        <dbReference type="ChEBI" id="CHEBI:18608"/>
        <dbReference type="ChEBI" id="CHEBI:19950"/>
        <dbReference type="ChEBI" id="CHEBI:57453"/>
        <dbReference type="ChEBI" id="CHEBI:132111"/>
    </reaction>
</comment>
<comment type="biophysicochemical properties">
    <phDependence>
        <text evidence="1">Optimum pH is 8.0 (in the presence of 1 mM tetrahydrofolate).</text>
    </phDependence>
</comment>
<comment type="pathway">
    <text evidence="4">Secondary metabolite metabolism; lignin degradation.</text>
</comment>
<comment type="induction">
    <text evidence="1">Induced by growth on syringate.</text>
</comment>
<comment type="disruption phenotype">
    <text evidence="1">Mutant cannot grow on syringate, but grows on vanillate.</text>
</comment>
<comment type="similarity">
    <text evidence="3">Belongs to the GcvT family.</text>
</comment>
<keyword id="KW-0439">Lignin degradation</keyword>
<keyword id="KW-0489">Methyltransferase</keyword>
<keyword id="KW-1185">Reference proteome</keyword>
<keyword id="KW-0808">Transferase</keyword>
<proteinExistence type="evidence at protein level"/>